<accession>B8H8L7</accession>
<reference key="1">
    <citation type="submission" date="2009-01" db="EMBL/GenBank/DDBJ databases">
        <title>Complete sequence of chromosome of Arthrobacter chlorophenolicus A6.</title>
        <authorList>
            <consortium name="US DOE Joint Genome Institute"/>
            <person name="Lucas S."/>
            <person name="Copeland A."/>
            <person name="Lapidus A."/>
            <person name="Glavina del Rio T."/>
            <person name="Tice H."/>
            <person name="Bruce D."/>
            <person name="Goodwin L."/>
            <person name="Pitluck S."/>
            <person name="Goltsman E."/>
            <person name="Clum A."/>
            <person name="Larimer F."/>
            <person name="Land M."/>
            <person name="Hauser L."/>
            <person name="Kyrpides N."/>
            <person name="Mikhailova N."/>
            <person name="Jansson J."/>
            <person name="Richardson P."/>
        </authorList>
    </citation>
    <scope>NUCLEOTIDE SEQUENCE [LARGE SCALE GENOMIC DNA]</scope>
    <source>
        <strain>ATCC 700700 / DSM 12829 / CIP 107037 / JCM 12360 / KCTC 9906 / NCIMB 13794 / A6</strain>
    </source>
</reference>
<feature type="chain" id="PRO_0000397134" description="Proteasome subunit alpha">
    <location>
        <begin position="1"/>
        <end position="236"/>
    </location>
</feature>
<sequence length="236" mass="25662">MTQQFYVSPEQLMKDRADFARKGIARGKSVVVISCEDGIALVAENPSPSLHKIGEIYDKIAFAAVGKYNEFESLRQAGVRYADVRGYSYDREDVTARGLASVYAQSLGAVFTAEQKPFEVELAVAEVGATQAEDHLYRLTFDGSIADEHSFVVMGGQADRVASAIDQGWRASLGFPDAVRLALNGLAPAPETEETAKPVPARAIEVAVLDRHSEEVRGARRAFRRLNDADITALLA</sequence>
<proteinExistence type="inferred from homology"/>
<keyword id="KW-0963">Cytoplasm</keyword>
<keyword id="KW-0647">Proteasome</keyword>
<dbReference type="EMBL" id="CP001341">
    <property type="protein sequence ID" value="ACL39895.1"/>
    <property type="molecule type" value="Genomic_DNA"/>
</dbReference>
<dbReference type="RefSeq" id="WP_015937115.1">
    <property type="nucleotide sequence ID" value="NC_011886.1"/>
</dbReference>
<dbReference type="SMR" id="B8H8L7"/>
<dbReference type="STRING" id="452863.Achl_1920"/>
<dbReference type="MEROPS" id="T01.980"/>
<dbReference type="KEGG" id="ach:Achl_1920"/>
<dbReference type="eggNOG" id="COG0638">
    <property type="taxonomic scope" value="Bacteria"/>
</dbReference>
<dbReference type="HOGENOM" id="CLU_071031_0_0_11"/>
<dbReference type="OrthoDB" id="9775643at2"/>
<dbReference type="UniPathway" id="UPA00997"/>
<dbReference type="Proteomes" id="UP000002505">
    <property type="component" value="Chromosome"/>
</dbReference>
<dbReference type="GO" id="GO:0005737">
    <property type="term" value="C:cytoplasm"/>
    <property type="evidence" value="ECO:0007669"/>
    <property type="project" value="UniProtKB-SubCell"/>
</dbReference>
<dbReference type="GO" id="GO:0019773">
    <property type="term" value="C:proteasome core complex, alpha-subunit complex"/>
    <property type="evidence" value="ECO:0007669"/>
    <property type="project" value="UniProtKB-UniRule"/>
</dbReference>
<dbReference type="GO" id="GO:0004298">
    <property type="term" value="F:threonine-type endopeptidase activity"/>
    <property type="evidence" value="ECO:0007669"/>
    <property type="project" value="InterPro"/>
</dbReference>
<dbReference type="GO" id="GO:0019941">
    <property type="term" value="P:modification-dependent protein catabolic process"/>
    <property type="evidence" value="ECO:0007669"/>
    <property type="project" value="UniProtKB-UniRule"/>
</dbReference>
<dbReference type="GO" id="GO:0010498">
    <property type="term" value="P:proteasomal protein catabolic process"/>
    <property type="evidence" value="ECO:0007669"/>
    <property type="project" value="UniProtKB-UniRule"/>
</dbReference>
<dbReference type="CDD" id="cd01906">
    <property type="entry name" value="proteasome_protease_HslV"/>
    <property type="match status" value="1"/>
</dbReference>
<dbReference type="Gene3D" id="3.60.20.10">
    <property type="entry name" value="Glutamine Phosphoribosylpyrophosphate, subunit 1, domain 1"/>
    <property type="match status" value="1"/>
</dbReference>
<dbReference type="HAMAP" id="MF_00289_B">
    <property type="entry name" value="Proteasome_A_B"/>
    <property type="match status" value="1"/>
</dbReference>
<dbReference type="InterPro" id="IPR029055">
    <property type="entry name" value="Ntn_hydrolases_N"/>
</dbReference>
<dbReference type="InterPro" id="IPR023332">
    <property type="entry name" value="Proteasome_alpha-type"/>
</dbReference>
<dbReference type="InterPro" id="IPR022296">
    <property type="entry name" value="Proteasome_asu_bac"/>
</dbReference>
<dbReference type="InterPro" id="IPR001353">
    <property type="entry name" value="Proteasome_sua/b"/>
</dbReference>
<dbReference type="NCBIfam" id="TIGR03691">
    <property type="entry name" value="20S_bact_alpha"/>
    <property type="match status" value="1"/>
</dbReference>
<dbReference type="Pfam" id="PF00227">
    <property type="entry name" value="Proteasome"/>
    <property type="match status" value="1"/>
</dbReference>
<dbReference type="SUPFAM" id="SSF56235">
    <property type="entry name" value="N-terminal nucleophile aminohydrolases (Ntn hydrolases)"/>
    <property type="match status" value="1"/>
</dbReference>
<dbReference type="PROSITE" id="PS51475">
    <property type="entry name" value="PROTEASOME_ALPHA_2"/>
    <property type="match status" value="1"/>
</dbReference>
<evidence type="ECO:0000255" key="1">
    <source>
        <dbReference type="HAMAP-Rule" id="MF_00289"/>
    </source>
</evidence>
<organism>
    <name type="scientific">Pseudarthrobacter chlorophenolicus (strain ATCC 700700 / DSM 12829 / CIP 107037 / JCM 12360 / KCTC 9906 / NCIMB 13794 / A6)</name>
    <name type="common">Arthrobacter chlorophenolicus</name>
    <dbReference type="NCBI Taxonomy" id="452863"/>
    <lineage>
        <taxon>Bacteria</taxon>
        <taxon>Bacillati</taxon>
        <taxon>Actinomycetota</taxon>
        <taxon>Actinomycetes</taxon>
        <taxon>Micrococcales</taxon>
        <taxon>Micrococcaceae</taxon>
        <taxon>Pseudarthrobacter</taxon>
    </lineage>
</organism>
<name>PSA_PSECP</name>
<protein>
    <recommendedName>
        <fullName evidence="1">Proteasome subunit alpha</fullName>
    </recommendedName>
    <alternativeName>
        <fullName evidence="1">20S proteasome alpha subunit</fullName>
    </alternativeName>
    <alternativeName>
        <fullName evidence="1">Proteasome core protein PrcA</fullName>
    </alternativeName>
</protein>
<gene>
    <name evidence="1" type="primary">prcA</name>
    <name type="ordered locus">Achl_1920</name>
</gene>
<comment type="function">
    <text evidence="1">Component of the proteasome core, a large protease complex with broad specificity involved in protein degradation.</text>
</comment>
<comment type="activity regulation">
    <text evidence="1">The formation of the proteasomal ATPase ARC-20S proteasome complex, likely via the docking of the C-termini of ARC into the intersubunit pockets in the alpha-rings, may trigger opening of the gate for substrate entry. Interconversion between the open-gate and close-gate conformations leads to a dynamic regulation of the 20S proteasome proteolysis activity.</text>
</comment>
<comment type="pathway">
    <text evidence="1">Protein degradation; proteasomal Pup-dependent pathway.</text>
</comment>
<comment type="subunit">
    <text evidence="1">The 20S proteasome core is composed of 14 alpha and 14 beta subunits that assemble into four stacked heptameric rings, resulting in a barrel-shaped structure. The two inner rings, each composed of seven catalytic beta subunits, are sandwiched by two outer rings, each composed of seven alpha subunits. The catalytic chamber with the active sites is on the inside of the barrel. Has a gated structure, the ends of the cylinder being occluded by the N-termini of the alpha-subunits. Is capped by the proteasome-associated ATPase, ARC.</text>
</comment>
<comment type="subcellular location">
    <subcellularLocation>
        <location evidence="1">Cytoplasm</location>
    </subcellularLocation>
</comment>
<comment type="similarity">
    <text evidence="1">Belongs to the peptidase T1A family.</text>
</comment>